<accession>P18358</accession>
<gene>
    <name type="primary">tnpR</name>
    <name type="synonym">binL</name>
</gene>
<protein>
    <recommendedName>
        <fullName>Transposon Tn552 resolvase</fullName>
    </recommendedName>
</protein>
<keyword id="KW-0229">DNA integration</keyword>
<keyword id="KW-0233">DNA recombination</keyword>
<keyword id="KW-0238">DNA-binding</keyword>
<keyword id="KW-0614">Plasmid</keyword>
<keyword id="KW-0814">Transposable element</keyword>
<comment type="function">
    <text evidence="3">Resolvase catalyzes the resolution (a site-specific recombination) of the cointegrated replicon to yield the final transposition products.</text>
</comment>
<comment type="similarity">
    <text evidence="4">Belongs to the site-specific recombinase resolvase family.</text>
</comment>
<organism>
    <name type="scientific">Staphylococcus aureus</name>
    <dbReference type="NCBI Taxonomy" id="1280"/>
    <lineage>
        <taxon>Bacteria</taxon>
        <taxon>Bacillati</taxon>
        <taxon>Bacillota</taxon>
        <taxon>Bacilli</taxon>
        <taxon>Bacillales</taxon>
        <taxon>Staphylococcaceae</taxon>
        <taxon>Staphylococcus</taxon>
    </lineage>
</organism>
<geneLocation type="plasmid">
    <name>pI9789</name>
</geneLocation>
<sequence>MKIGYARVSTGLQNLNLQEDRLNAYGSEKIFSDHISGSKSKRPGLDKAIEFARSGDTIVVWRLDRLGRNMEDLITLVNELNERGVSFHSLEENITMDKSTSTGQLLFHLFAAFAEFERNLILERSSAGRIAARARGRYGGRPEKLNQKDLNLLKTLYDNGTPIKTIAEQWQVSRTTIYRYLNKLEEKEDEKQGEVSN</sequence>
<evidence type="ECO:0000255" key="1"/>
<evidence type="ECO:0000255" key="2">
    <source>
        <dbReference type="PROSITE-ProRule" id="PRU01072"/>
    </source>
</evidence>
<evidence type="ECO:0000269" key="3">
    <source>
    </source>
</evidence>
<evidence type="ECO:0000305" key="4"/>
<reference key="1">
    <citation type="journal article" date="1990" name="Mol. Microbiol.">
        <title>Tn552, a novel transposable element from Staphylococcus aureus.</title>
        <authorList>
            <person name="Rowland S.J."/>
            <person name="Dyke K.G.H."/>
        </authorList>
    </citation>
    <scope>NUCLEOTIDE SEQUENCE [GENOMIC DNA]</scope>
    <source>
        <strain>NCTC 9789 / PS80</strain>
    </source>
</reference>
<reference key="2">
    <citation type="journal article" date="1989" name="EMBO J.">
        <title>Characterization of the staphylococcal beta-lactamase transposon Tn552.</title>
        <authorList>
            <person name="Rowland S.J."/>
            <person name="Dyke K.G.H."/>
        </authorList>
    </citation>
    <scope>FUNCTION</scope>
    <source>
        <strain>NCTC 9789 / PS80</strain>
    </source>
</reference>
<proteinExistence type="inferred from homology"/>
<dbReference type="EMBL" id="X52734">
    <property type="protein sequence ID" value="CAA36950.1"/>
    <property type="molecule type" value="Genomic_DNA"/>
</dbReference>
<dbReference type="SMR" id="P18358"/>
<dbReference type="GO" id="GO:0003677">
    <property type="term" value="F:DNA binding"/>
    <property type="evidence" value="ECO:0007669"/>
    <property type="project" value="UniProtKB-KW"/>
</dbReference>
<dbReference type="GO" id="GO:0000150">
    <property type="term" value="F:DNA strand exchange activity"/>
    <property type="evidence" value="ECO:0007669"/>
    <property type="project" value="InterPro"/>
</dbReference>
<dbReference type="GO" id="GO:0015074">
    <property type="term" value="P:DNA integration"/>
    <property type="evidence" value="ECO:0007669"/>
    <property type="project" value="UniProtKB-KW"/>
</dbReference>
<dbReference type="CDD" id="cd00569">
    <property type="entry name" value="HTH_Hin_like"/>
    <property type="match status" value="1"/>
</dbReference>
<dbReference type="CDD" id="cd03768">
    <property type="entry name" value="SR_ResInv"/>
    <property type="match status" value="1"/>
</dbReference>
<dbReference type="FunFam" id="3.40.50.1390:FF:000001">
    <property type="entry name" value="DNA recombinase"/>
    <property type="match status" value="1"/>
</dbReference>
<dbReference type="Gene3D" id="1.10.10.60">
    <property type="entry name" value="Homeodomain-like"/>
    <property type="match status" value="1"/>
</dbReference>
<dbReference type="Gene3D" id="3.40.50.1390">
    <property type="entry name" value="Resolvase, N-terminal catalytic domain"/>
    <property type="match status" value="1"/>
</dbReference>
<dbReference type="InterPro" id="IPR009057">
    <property type="entry name" value="Homeodomain-like_sf"/>
</dbReference>
<dbReference type="InterPro" id="IPR006118">
    <property type="entry name" value="Recombinase_CS"/>
</dbReference>
<dbReference type="InterPro" id="IPR006119">
    <property type="entry name" value="Resolv_N"/>
</dbReference>
<dbReference type="InterPro" id="IPR036162">
    <property type="entry name" value="Resolvase-like_N_sf"/>
</dbReference>
<dbReference type="InterPro" id="IPR006120">
    <property type="entry name" value="Resolvase_HTH_dom"/>
</dbReference>
<dbReference type="InterPro" id="IPR050639">
    <property type="entry name" value="SSR_resolvase"/>
</dbReference>
<dbReference type="PANTHER" id="PTHR30461">
    <property type="entry name" value="DNA-INVERTASE FROM LAMBDOID PROPHAGE"/>
    <property type="match status" value="1"/>
</dbReference>
<dbReference type="PANTHER" id="PTHR30461:SF2">
    <property type="entry name" value="SERINE RECOMBINASE PINE-RELATED"/>
    <property type="match status" value="1"/>
</dbReference>
<dbReference type="Pfam" id="PF02796">
    <property type="entry name" value="HTH_7"/>
    <property type="match status" value="1"/>
</dbReference>
<dbReference type="Pfam" id="PF00239">
    <property type="entry name" value="Resolvase"/>
    <property type="match status" value="1"/>
</dbReference>
<dbReference type="SMART" id="SM00857">
    <property type="entry name" value="Resolvase"/>
    <property type="match status" value="1"/>
</dbReference>
<dbReference type="SUPFAM" id="SSF46689">
    <property type="entry name" value="Homeodomain-like"/>
    <property type="match status" value="1"/>
</dbReference>
<dbReference type="SUPFAM" id="SSF53041">
    <property type="entry name" value="Resolvase-like"/>
    <property type="match status" value="1"/>
</dbReference>
<dbReference type="PROSITE" id="PS00397">
    <property type="entry name" value="RECOMBINASES_1"/>
    <property type="match status" value="1"/>
</dbReference>
<dbReference type="PROSITE" id="PS00398">
    <property type="entry name" value="RECOMBINASES_2"/>
    <property type="match status" value="1"/>
</dbReference>
<dbReference type="PROSITE" id="PS51736">
    <property type="entry name" value="RECOMBINASES_3"/>
    <property type="match status" value="1"/>
</dbReference>
<name>BINL_STAAU</name>
<feature type="chain" id="PRO_0000196380" description="Transposon Tn552 resolvase">
    <location>
        <begin position="1"/>
        <end position="197"/>
    </location>
</feature>
<feature type="domain" description="Resolvase/invertase-type recombinase catalytic" evidence="2">
    <location>
        <begin position="1"/>
        <end position="136"/>
    </location>
</feature>
<feature type="DNA-binding region" description="H-T-H motif" evidence="1">
    <location>
        <begin position="163"/>
        <end position="182"/>
    </location>
</feature>
<feature type="active site" description="O-(5'-phospho-DNA)-serine intermediate" evidence="2">
    <location>
        <position position="9"/>
    </location>
</feature>